<sequence>MKMADAKQKRNEQLKRWIGSETDLEPPLLKKKKTKVKFDDGAVFLAACSSGDTEEVLRMLDRGADINYANVDGLTALHQACIDDNVDMVTFLVEHGACINQPDNEGWIPLHAAASCGYLDIAEYLISQGASVGVVNSEGETPLDIAEEEAMEELLQNEINRQGVDIEAARKEEERIMLRDARQWLNSGQINDVRHTKSGGTALHVAAAKGYAEVLKLLIQAGYDVNIKDYDGWTPLHAAAHWGKEEACRILVEHLCDMDVVNKVGQTAFDVADEDILGYLEELQKKQNLLLSEKKDVKKSPLIETTTTGDNNQSVKPLKSKETLLLEPEKTAPRIETLEPEKVDEEEGEGKKDESSCSSEEEEEEDSESENEADKTKSSVPSSVSNSTPTTAPSSITVTSPTTPSNQVTTPTSPTKKVSTPAGKLSPKEEDRKDESPASWRLGLRKTGSYGALAEISTTKEAQKEKDTAGVMRSASSPRLSSSLDNKDKEKEKEKTRLAYVAPTIPRRHVSTSDIDEKENRDSAASLVRSGSYTRRRWEEDLKNSDGTASTNRTSSYQRSTSHTLALGRTSSSRDLPAKSSSASSLEPNNSKAWQPSSYYQSYSIHRSGSFGRRHEDPLSSTSSSTTTTTTTSSVTSPTGHRSLLSRYWAEESAEKEKEKEKESATVIPTINTAGTTTTTSTTGTVLGSDGRERRRSYLTPVRDEESESQRKARSRQARQSRRSTQGVTLTDLQEAEKTIGRSRPTRPREDEKEEKEKQDKEKQEEKKETETKEDDYRSRYRSFEEKYRTSLASSTTASSTIPSSSSSSSSSLYSTSSLNRPNSLTGLTSTYSRSTRDTDRESDRKEKDEDRDGDDKSQPRSIRDRRRPREKRRSTGVSFWTQDSDENEPDHPSDSEGSTKGEPQSDRLSSNDPLSTSTSSTDRYESLSSRGIGESRRPYSRFEKDDSTDYKKLYEQILAENEKLKAQLRDTELELSDLKLQLEKATQRQERFADRSQLEMEKRERRALERKISEMEEELKMLPDLKADNQRLKDENGALIRVISKLSK</sequence>
<feature type="chain" id="PRO_0000355557" description="Protein phosphatase 1 regulatory subunit 12A">
    <location>
        <begin position="1"/>
        <end position="1049"/>
    </location>
</feature>
<feature type="repeat" description="ANK 1">
    <location>
        <begin position="39"/>
        <end position="68"/>
    </location>
</feature>
<feature type="repeat" description="ANK 2">
    <location>
        <begin position="72"/>
        <end position="101"/>
    </location>
</feature>
<feature type="repeat" description="ANK 3">
    <location>
        <begin position="105"/>
        <end position="134"/>
    </location>
</feature>
<feature type="repeat" description="ANK 4">
    <location>
        <begin position="138"/>
        <end position="164"/>
    </location>
</feature>
<feature type="repeat" description="ANK 5">
    <location>
        <begin position="198"/>
        <end position="227"/>
    </location>
</feature>
<feature type="repeat" description="ANK 6">
    <location>
        <begin position="231"/>
        <end position="260"/>
    </location>
</feature>
<feature type="region of interest" description="Disordered" evidence="2">
    <location>
        <begin position="302"/>
        <end position="947"/>
    </location>
</feature>
<feature type="compositionally biased region" description="Polar residues" evidence="2">
    <location>
        <begin position="303"/>
        <end position="315"/>
    </location>
</feature>
<feature type="compositionally biased region" description="Basic and acidic residues" evidence="2">
    <location>
        <begin position="319"/>
        <end position="341"/>
    </location>
</feature>
<feature type="compositionally biased region" description="Acidic residues" evidence="2">
    <location>
        <begin position="359"/>
        <end position="371"/>
    </location>
</feature>
<feature type="compositionally biased region" description="Low complexity" evidence="2">
    <location>
        <begin position="378"/>
        <end position="421"/>
    </location>
</feature>
<feature type="compositionally biased region" description="Basic and acidic residues" evidence="2">
    <location>
        <begin position="426"/>
        <end position="436"/>
    </location>
</feature>
<feature type="compositionally biased region" description="Low complexity" evidence="2">
    <location>
        <begin position="473"/>
        <end position="484"/>
    </location>
</feature>
<feature type="compositionally biased region" description="Basic and acidic residues" evidence="2">
    <location>
        <begin position="485"/>
        <end position="497"/>
    </location>
</feature>
<feature type="compositionally biased region" description="Polar residues" evidence="2">
    <location>
        <begin position="545"/>
        <end position="564"/>
    </location>
</feature>
<feature type="compositionally biased region" description="Low complexity" evidence="2">
    <location>
        <begin position="571"/>
        <end position="592"/>
    </location>
</feature>
<feature type="compositionally biased region" description="Polar residues" evidence="2">
    <location>
        <begin position="593"/>
        <end position="607"/>
    </location>
</feature>
<feature type="compositionally biased region" description="Low complexity" evidence="2">
    <location>
        <begin position="620"/>
        <end position="639"/>
    </location>
</feature>
<feature type="compositionally biased region" description="Basic and acidic residues" evidence="2">
    <location>
        <begin position="649"/>
        <end position="664"/>
    </location>
</feature>
<feature type="compositionally biased region" description="Low complexity" evidence="2">
    <location>
        <begin position="665"/>
        <end position="686"/>
    </location>
</feature>
<feature type="compositionally biased region" description="Basic and acidic residues" evidence="2">
    <location>
        <begin position="702"/>
        <end position="711"/>
    </location>
</feature>
<feature type="compositionally biased region" description="Basic residues" evidence="2">
    <location>
        <begin position="712"/>
        <end position="722"/>
    </location>
</feature>
<feature type="compositionally biased region" description="Basic and acidic residues" evidence="2">
    <location>
        <begin position="747"/>
        <end position="789"/>
    </location>
</feature>
<feature type="compositionally biased region" description="Low complexity" evidence="2">
    <location>
        <begin position="790"/>
        <end position="819"/>
    </location>
</feature>
<feature type="compositionally biased region" description="Polar residues" evidence="2">
    <location>
        <begin position="820"/>
        <end position="829"/>
    </location>
</feature>
<feature type="compositionally biased region" description="Basic and acidic residues" evidence="2">
    <location>
        <begin position="835"/>
        <end position="863"/>
    </location>
</feature>
<feature type="compositionally biased region" description="Basic residues" evidence="2">
    <location>
        <begin position="864"/>
        <end position="875"/>
    </location>
</feature>
<feature type="compositionally biased region" description="Basic and acidic residues" evidence="2">
    <location>
        <begin position="890"/>
        <end position="906"/>
    </location>
</feature>
<feature type="compositionally biased region" description="Basic and acidic residues" evidence="2">
    <location>
        <begin position="934"/>
        <end position="947"/>
    </location>
</feature>
<feature type="splice variant" id="VSP_035913" description="In isoform 2." evidence="3">
    <original>STSHTLALGRTSSSRDLPAKSSSASSLEPNNSKAWQPSSYYQSYSIHRSGSFGRRHEDPLSSTS</original>
    <variation>RLAFYSVLVLLVCQSMLLLLLLLSQMLLAPFTDKLLAPALSLHLCLIVILKHHNHLINIVRVDV</variation>
    <location>
        <begin position="560"/>
        <end position="623"/>
    </location>
</feature>
<feature type="splice variant" id="VSP_035914" description="In isoform 2." evidence="3">
    <location>
        <begin position="624"/>
        <end position="1049"/>
    </location>
</feature>
<feature type="sequence conflict" description="In Ref. 3; AAH98558." evidence="4" ref="3">
    <original>K</original>
    <variation>E</variation>
    <location>
        <position position="489"/>
    </location>
</feature>
<feature type="sequence conflict" description="In Ref. 1; AAT68110." evidence="4" ref="1">
    <location>
        <begin position="655"/>
        <end position="656"/>
    </location>
</feature>
<keyword id="KW-0025">Alternative splicing</keyword>
<keyword id="KW-0040">ANK repeat</keyword>
<keyword id="KW-0963">Cytoplasm</keyword>
<keyword id="KW-1185">Reference proteome</keyword>
<keyword id="KW-0677">Repeat</keyword>
<name>MYPT1_DANRE</name>
<gene>
    <name type="primary">ppp1r12a</name>
    <name type="synonym">mbs</name>
    <name type="synonym">mypt1</name>
    <name type="ORF">si:dkey-28j4.1</name>
    <name type="ORF">zgc:110448</name>
</gene>
<organism>
    <name type="scientific">Danio rerio</name>
    <name type="common">Zebrafish</name>
    <name type="synonym">Brachydanio rerio</name>
    <dbReference type="NCBI Taxonomy" id="7955"/>
    <lineage>
        <taxon>Eukaryota</taxon>
        <taxon>Metazoa</taxon>
        <taxon>Chordata</taxon>
        <taxon>Craniata</taxon>
        <taxon>Vertebrata</taxon>
        <taxon>Euteleostomi</taxon>
        <taxon>Actinopterygii</taxon>
        <taxon>Neopterygii</taxon>
        <taxon>Teleostei</taxon>
        <taxon>Ostariophysi</taxon>
        <taxon>Cypriniformes</taxon>
        <taxon>Danionidae</taxon>
        <taxon>Danioninae</taxon>
        <taxon>Danio</taxon>
    </lineage>
</organism>
<accession>Q6DRG7</accession>
<accession>Q4G0B0</accession>
<accession>Q5TZ13</accession>
<proteinExistence type="evidence at transcript level"/>
<dbReference type="EMBL" id="AY648792">
    <property type="protein sequence ID" value="AAT68110.1"/>
    <property type="molecule type" value="mRNA"/>
</dbReference>
<dbReference type="EMBL" id="BX537286">
    <property type="protein sequence ID" value="CAH69075.1"/>
    <property type="status" value="ALT_INIT"/>
    <property type="molecule type" value="Genomic_DNA"/>
</dbReference>
<dbReference type="EMBL" id="BC098558">
    <property type="protein sequence ID" value="AAH98558.1"/>
    <property type="molecule type" value="mRNA"/>
</dbReference>
<dbReference type="RefSeq" id="NP_001003870.2">
    <molecule id="Q6DRG7-1"/>
    <property type="nucleotide sequence ID" value="NM_001003870.2"/>
</dbReference>
<dbReference type="SMR" id="Q6DRG7"/>
<dbReference type="FunCoup" id="Q6DRG7">
    <property type="interactions" value="2713"/>
</dbReference>
<dbReference type="STRING" id="7955.ENSDARP00000118021"/>
<dbReference type="PaxDb" id="7955-ENSDARP00000118021"/>
<dbReference type="GeneID" id="445393"/>
<dbReference type="KEGG" id="dre:445393"/>
<dbReference type="AGR" id="ZFIN:ZDB-GENE-041011-3"/>
<dbReference type="CTD" id="4659"/>
<dbReference type="ZFIN" id="ZDB-GENE-041011-3">
    <property type="gene designation" value="ppp1r12a"/>
</dbReference>
<dbReference type="eggNOG" id="KOG0505">
    <property type="taxonomic scope" value="Eukaryota"/>
</dbReference>
<dbReference type="InParanoid" id="Q6DRG7"/>
<dbReference type="OrthoDB" id="539213at2759"/>
<dbReference type="PhylomeDB" id="Q6DRG7"/>
<dbReference type="TreeFam" id="TF105543"/>
<dbReference type="Reactome" id="R-DRE-2565942">
    <property type="pathway name" value="Regulation of PLK1 Activity at G2/M Transition"/>
</dbReference>
<dbReference type="Reactome" id="R-DRE-5625740">
    <property type="pathway name" value="RHO GTPases activate PKNs"/>
</dbReference>
<dbReference type="PRO" id="PR:Q6DRG7"/>
<dbReference type="Proteomes" id="UP000000437">
    <property type="component" value="Chromosome 4"/>
</dbReference>
<dbReference type="GO" id="GO:0031672">
    <property type="term" value="C:A band"/>
    <property type="evidence" value="ECO:0000250"/>
    <property type="project" value="UniProtKB"/>
</dbReference>
<dbReference type="GO" id="GO:0005737">
    <property type="term" value="C:cytoplasm"/>
    <property type="evidence" value="ECO:0000314"/>
    <property type="project" value="ZFIN"/>
</dbReference>
<dbReference type="GO" id="GO:0072357">
    <property type="term" value="C:PTW/PP1 phosphatase complex"/>
    <property type="evidence" value="ECO:0000250"/>
    <property type="project" value="UniProtKB"/>
</dbReference>
<dbReference type="GO" id="GO:0030018">
    <property type="term" value="C:Z disc"/>
    <property type="evidence" value="ECO:0000250"/>
    <property type="project" value="UniProtKB"/>
</dbReference>
<dbReference type="GO" id="GO:0071889">
    <property type="term" value="F:14-3-3 protein binding"/>
    <property type="evidence" value="ECO:0000250"/>
    <property type="project" value="UniProtKB"/>
</dbReference>
<dbReference type="GO" id="GO:0004857">
    <property type="term" value="F:enzyme inhibitor activity"/>
    <property type="evidence" value="ECO:0000318"/>
    <property type="project" value="GO_Central"/>
</dbReference>
<dbReference type="GO" id="GO:0017020">
    <property type="term" value="F:myosin phosphatase regulator activity"/>
    <property type="evidence" value="ECO:0000318"/>
    <property type="project" value="GO_Central"/>
</dbReference>
<dbReference type="GO" id="GO:0019208">
    <property type="term" value="F:phosphatase regulator activity"/>
    <property type="evidence" value="ECO:0000250"/>
    <property type="project" value="UniProtKB"/>
</dbReference>
<dbReference type="GO" id="GO:0046982">
    <property type="term" value="F:protein heterodimerization activity"/>
    <property type="evidence" value="ECO:0000353"/>
    <property type="project" value="ZFIN"/>
</dbReference>
<dbReference type="GO" id="GO:0019901">
    <property type="term" value="F:protein kinase binding"/>
    <property type="evidence" value="ECO:0007669"/>
    <property type="project" value="InterPro"/>
</dbReference>
<dbReference type="GO" id="GO:0051017">
    <property type="term" value="P:actin filament bundle assembly"/>
    <property type="evidence" value="ECO:0000315"/>
    <property type="project" value="ZFIN"/>
</dbReference>
<dbReference type="GO" id="GO:0070650">
    <property type="term" value="P:actin filament bundle distribution"/>
    <property type="evidence" value="ECO:0000315"/>
    <property type="project" value="ZFIN"/>
</dbReference>
<dbReference type="GO" id="GO:0007409">
    <property type="term" value="P:axonogenesis"/>
    <property type="evidence" value="ECO:0000315"/>
    <property type="project" value="ZFIN"/>
</dbReference>
<dbReference type="GO" id="GO:0060028">
    <property type="term" value="P:convergent extension involved in axis elongation"/>
    <property type="evidence" value="ECO:0000316"/>
    <property type="project" value="ZFIN"/>
</dbReference>
<dbReference type="GO" id="GO:0031017">
    <property type="term" value="P:exocrine pancreas development"/>
    <property type="evidence" value="ECO:0000315"/>
    <property type="project" value="ZFIN"/>
</dbReference>
<dbReference type="GO" id="GO:0001889">
    <property type="term" value="P:liver development"/>
    <property type="evidence" value="ECO:0000315"/>
    <property type="project" value="ZFIN"/>
</dbReference>
<dbReference type="GO" id="GO:0021555">
    <property type="term" value="P:midbrain-hindbrain boundary morphogenesis"/>
    <property type="evidence" value="ECO:0000315"/>
    <property type="project" value="ZFIN"/>
</dbReference>
<dbReference type="GO" id="GO:0008045">
    <property type="term" value="P:motor neuron axon guidance"/>
    <property type="evidence" value="ECO:0000315"/>
    <property type="project" value="ZFIN"/>
</dbReference>
<dbReference type="GO" id="GO:0048812">
    <property type="term" value="P:neuron projection morphogenesis"/>
    <property type="evidence" value="ECO:0000318"/>
    <property type="project" value="GO_Central"/>
</dbReference>
<dbReference type="GO" id="GO:0030510">
    <property type="term" value="P:regulation of BMP signaling pathway"/>
    <property type="evidence" value="ECO:0000315"/>
    <property type="project" value="ZFIN"/>
</dbReference>
<dbReference type="GO" id="GO:0030155">
    <property type="term" value="P:regulation of cell adhesion"/>
    <property type="evidence" value="ECO:0000250"/>
    <property type="project" value="UniProtKB"/>
</dbReference>
<dbReference type="GO" id="GO:0008360">
    <property type="term" value="P:regulation of cell shape"/>
    <property type="evidence" value="ECO:0000315"/>
    <property type="project" value="ZFIN"/>
</dbReference>
<dbReference type="GO" id="GO:0007165">
    <property type="term" value="P:signal transduction"/>
    <property type="evidence" value="ECO:0007669"/>
    <property type="project" value="InterPro"/>
</dbReference>
<dbReference type="CDD" id="cd21944">
    <property type="entry name" value="IPD_MYPT1"/>
    <property type="match status" value="1"/>
</dbReference>
<dbReference type="FunFam" id="1.25.40.20:FF:000004">
    <property type="entry name" value="Phosphatase 1 regulatory subunit 12A"/>
    <property type="match status" value="1"/>
</dbReference>
<dbReference type="FunFam" id="1.25.40.20:FF:000876">
    <property type="entry name" value="Protein phosphatase 1 regulatory subunit 12A"/>
    <property type="match status" value="1"/>
</dbReference>
<dbReference type="Gene3D" id="6.10.140.390">
    <property type="match status" value="1"/>
</dbReference>
<dbReference type="Gene3D" id="6.10.250.1820">
    <property type="match status" value="1"/>
</dbReference>
<dbReference type="Gene3D" id="1.25.40.20">
    <property type="entry name" value="Ankyrin repeat-containing domain"/>
    <property type="match status" value="2"/>
</dbReference>
<dbReference type="InterPro" id="IPR002110">
    <property type="entry name" value="Ankyrin_rpt"/>
</dbReference>
<dbReference type="InterPro" id="IPR036770">
    <property type="entry name" value="Ankyrin_rpt-contain_sf"/>
</dbReference>
<dbReference type="InterPro" id="IPR017401">
    <property type="entry name" value="MYPT1/MYPT2/Mbs85"/>
</dbReference>
<dbReference type="InterPro" id="IPR051226">
    <property type="entry name" value="PP1_Regulatory_Subunit"/>
</dbReference>
<dbReference type="InterPro" id="IPR031775">
    <property type="entry name" value="PRKG1_interact"/>
</dbReference>
<dbReference type="PANTHER" id="PTHR24179">
    <property type="entry name" value="PROTEIN PHOSPHATASE 1 REGULATORY SUBUNIT 12"/>
    <property type="match status" value="1"/>
</dbReference>
<dbReference type="PANTHER" id="PTHR24179:SF20">
    <property type="entry name" value="PROTEIN PHOSPHATASE 1 REGULATORY SUBUNIT 12A"/>
    <property type="match status" value="1"/>
</dbReference>
<dbReference type="Pfam" id="PF12796">
    <property type="entry name" value="Ank_2"/>
    <property type="match status" value="2"/>
</dbReference>
<dbReference type="Pfam" id="PF15898">
    <property type="entry name" value="PRKG1_interact"/>
    <property type="match status" value="1"/>
</dbReference>
<dbReference type="PIRSF" id="PIRSF038141">
    <property type="entry name" value="PP1_12ABC_vert"/>
    <property type="match status" value="1"/>
</dbReference>
<dbReference type="PRINTS" id="PR01415">
    <property type="entry name" value="ANKYRIN"/>
</dbReference>
<dbReference type="SMART" id="SM00248">
    <property type="entry name" value="ANK"/>
    <property type="match status" value="6"/>
</dbReference>
<dbReference type="SUPFAM" id="SSF48403">
    <property type="entry name" value="Ankyrin repeat"/>
    <property type="match status" value="1"/>
</dbReference>
<dbReference type="PROSITE" id="PS50297">
    <property type="entry name" value="ANK_REP_REGION"/>
    <property type="match status" value="1"/>
</dbReference>
<dbReference type="PROSITE" id="PS50088">
    <property type="entry name" value="ANK_REPEAT"/>
    <property type="match status" value="4"/>
</dbReference>
<evidence type="ECO:0000250" key="1"/>
<evidence type="ECO:0000256" key="2">
    <source>
        <dbReference type="SAM" id="MobiDB-lite"/>
    </source>
</evidence>
<evidence type="ECO:0000303" key="3">
    <source ref="3"/>
</evidence>
<evidence type="ECO:0000305" key="4"/>
<protein>
    <recommendedName>
        <fullName>Protein phosphatase 1 regulatory subunit 12A</fullName>
    </recommendedName>
    <alternativeName>
        <fullName>Myosin phosphatase-targeting subunit 1</fullName>
        <shortName>Myosin phosphatase target subunit 1</shortName>
    </alternativeName>
    <alternativeName>
        <fullName>Protein phosphatase myosin-binding subunit</fullName>
    </alternativeName>
</protein>
<reference key="1">
    <citation type="journal article" date="2004" name="Proc. Natl. Acad. Sci. U.S.A.">
        <title>Identification of 315 genes essential for early zebrafish development.</title>
        <authorList>
            <person name="Amsterdam A."/>
            <person name="Nissen R.M."/>
            <person name="Sun Z."/>
            <person name="Swindell E.C."/>
            <person name="Farrington S."/>
            <person name="Hopkins N."/>
        </authorList>
    </citation>
    <scope>NUCLEOTIDE SEQUENCE [LARGE SCALE MRNA] (ISOFORM 1)</scope>
    <source>
        <tissue>Embryo</tissue>
    </source>
</reference>
<reference key="2">
    <citation type="journal article" date="2013" name="Nature">
        <title>The zebrafish reference genome sequence and its relationship to the human genome.</title>
        <authorList>
            <person name="Howe K."/>
            <person name="Clark M.D."/>
            <person name="Torroja C.F."/>
            <person name="Torrance J."/>
            <person name="Berthelot C."/>
            <person name="Muffato M."/>
            <person name="Collins J.E."/>
            <person name="Humphray S."/>
            <person name="McLaren K."/>
            <person name="Matthews L."/>
            <person name="McLaren S."/>
            <person name="Sealy I."/>
            <person name="Caccamo M."/>
            <person name="Churcher C."/>
            <person name="Scott C."/>
            <person name="Barrett J.C."/>
            <person name="Koch R."/>
            <person name="Rauch G.J."/>
            <person name="White S."/>
            <person name="Chow W."/>
            <person name="Kilian B."/>
            <person name="Quintais L.T."/>
            <person name="Guerra-Assuncao J.A."/>
            <person name="Zhou Y."/>
            <person name="Gu Y."/>
            <person name="Yen J."/>
            <person name="Vogel J.H."/>
            <person name="Eyre T."/>
            <person name="Redmond S."/>
            <person name="Banerjee R."/>
            <person name="Chi J."/>
            <person name="Fu B."/>
            <person name="Langley E."/>
            <person name="Maguire S.F."/>
            <person name="Laird G.K."/>
            <person name="Lloyd D."/>
            <person name="Kenyon E."/>
            <person name="Donaldson S."/>
            <person name="Sehra H."/>
            <person name="Almeida-King J."/>
            <person name="Loveland J."/>
            <person name="Trevanion S."/>
            <person name="Jones M."/>
            <person name="Quail M."/>
            <person name="Willey D."/>
            <person name="Hunt A."/>
            <person name="Burton J."/>
            <person name="Sims S."/>
            <person name="McLay K."/>
            <person name="Plumb B."/>
            <person name="Davis J."/>
            <person name="Clee C."/>
            <person name="Oliver K."/>
            <person name="Clark R."/>
            <person name="Riddle C."/>
            <person name="Elliot D."/>
            <person name="Threadgold G."/>
            <person name="Harden G."/>
            <person name="Ware D."/>
            <person name="Begum S."/>
            <person name="Mortimore B."/>
            <person name="Kerry G."/>
            <person name="Heath P."/>
            <person name="Phillimore B."/>
            <person name="Tracey A."/>
            <person name="Corby N."/>
            <person name="Dunn M."/>
            <person name="Johnson C."/>
            <person name="Wood J."/>
            <person name="Clark S."/>
            <person name="Pelan S."/>
            <person name="Griffiths G."/>
            <person name="Smith M."/>
            <person name="Glithero R."/>
            <person name="Howden P."/>
            <person name="Barker N."/>
            <person name="Lloyd C."/>
            <person name="Stevens C."/>
            <person name="Harley J."/>
            <person name="Holt K."/>
            <person name="Panagiotidis G."/>
            <person name="Lovell J."/>
            <person name="Beasley H."/>
            <person name="Henderson C."/>
            <person name="Gordon D."/>
            <person name="Auger K."/>
            <person name="Wright D."/>
            <person name="Collins J."/>
            <person name="Raisen C."/>
            <person name="Dyer L."/>
            <person name="Leung K."/>
            <person name="Robertson L."/>
            <person name="Ambridge K."/>
            <person name="Leongamornlert D."/>
            <person name="McGuire S."/>
            <person name="Gilderthorp R."/>
            <person name="Griffiths C."/>
            <person name="Manthravadi D."/>
            <person name="Nichol S."/>
            <person name="Barker G."/>
            <person name="Whitehead S."/>
            <person name="Kay M."/>
            <person name="Brown J."/>
            <person name="Murnane C."/>
            <person name="Gray E."/>
            <person name="Humphries M."/>
            <person name="Sycamore N."/>
            <person name="Barker D."/>
            <person name="Saunders D."/>
            <person name="Wallis J."/>
            <person name="Babbage A."/>
            <person name="Hammond S."/>
            <person name="Mashreghi-Mohammadi M."/>
            <person name="Barr L."/>
            <person name="Martin S."/>
            <person name="Wray P."/>
            <person name="Ellington A."/>
            <person name="Matthews N."/>
            <person name="Ellwood M."/>
            <person name="Woodmansey R."/>
            <person name="Clark G."/>
            <person name="Cooper J."/>
            <person name="Tromans A."/>
            <person name="Grafham D."/>
            <person name="Skuce C."/>
            <person name="Pandian R."/>
            <person name="Andrews R."/>
            <person name="Harrison E."/>
            <person name="Kimberley A."/>
            <person name="Garnett J."/>
            <person name="Fosker N."/>
            <person name="Hall R."/>
            <person name="Garner P."/>
            <person name="Kelly D."/>
            <person name="Bird C."/>
            <person name="Palmer S."/>
            <person name="Gehring I."/>
            <person name="Berger A."/>
            <person name="Dooley C.M."/>
            <person name="Ersan-Urun Z."/>
            <person name="Eser C."/>
            <person name="Geiger H."/>
            <person name="Geisler M."/>
            <person name="Karotki L."/>
            <person name="Kirn A."/>
            <person name="Konantz J."/>
            <person name="Konantz M."/>
            <person name="Oberlander M."/>
            <person name="Rudolph-Geiger S."/>
            <person name="Teucke M."/>
            <person name="Lanz C."/>
            <person name="Raddatz G."/>
            <person name="Osoegawa K."/>
            <person name="Zhu B."/>
            <person name="Rapp A."/>
            <person name="Widaa S."/>
            <person name="Langford C."/>
            <person name="Yang F."/>
            <person name="Schuster S.C."/>
            <person name="Carter N.P."/>
            <person name="Harrow J."/>
            <person name="Ning Z."/>
            <person name="Herrero J."/>
            <person name="Searle S.M."/>
            <person name="Enright A."/>
            <person name="Geisler R."/>
            <person name="Plasterk R.H."/>
            <person name="Lee C."/>
            <person name="Westerfield M."/>
            <person name="de Jong P.J."/>
            <person name="Zon L.I."/>
            <person name="Postlethwait J.H."/>
            <person name="Nusslein-Volhard C."/>
            <person name="Hubbard T.J."/>
            <person name="Roest Crollius H."/>
            <person name="Rogers J."/>
            <person name="Stemple D.L."/>
        </authorList>
    </citation>
    <scope>NUCLEOTIDE SEQUENCE [LARGE SCALE GENOMIC DNA]</scope>
    <source>
        <strain>Tuebingen</strain>
    </source>
</reference>
<reference key="3">
    <citation type="submission" date="2005-07" db="EMBL/GenBank/DDBJ databases">
        <authorList>
            <consortium name="NIH - Zebrafish Gene Collection (ZGC) project"/>
        </authorList>
    </citation>
    <scope>NUCLEOTIDE SEQUENCE [LARGE SCALE MRNA] (ISOFORM 2)</scope>
    <source>
        <tissue>Olfactory epithelium</tissue>
    </source>
</reference>
<comment type="function">
    <text evidence="1">Regulates myosin phosphatase activity.</text>
</comment>
<comment type="subunit">
    <text evidence="1">PP1 comprises a catalytic subunit, and one or several targeting or regulatory subunits. Ppp1r12a mediates binding to myosin.</text>
</comment>
<comment type="subcellular location">
    <subcellularLocation>
        <location evidence="1">Cytoplasm</location>
    </subcellularLocation>
</comment>
<comment type="alternative products">
    <event type="alternative splicing"/>
    <isoform>
        <id>Q6DRG7-1</id>
        <name>1</name>
        <sequence type="displayed"/>
    </isoform>
    <isoform>
        <id>Q6DRG7-2</id>
        <name>2</name>
        <sequence type="described" ref="VSP_035913 VSP_035914"/>
    </isoform>
</comment>
<comment type="sequence caution" evidence="4">
    <conflict type="erroneous initiation">
        <sequence resource="EMBL-CDS" id="CAH69075"/>
    </conflict>
</comment>